<feature type="propeptide" id="PRO_0000031279" evidence="1">
    <location>
        <begin position="1"/>
        <end position="2"/>
    </location>
</feature>
<feature type="chain" id="PRO_0000031280" description="Ribulose bisphosphate carboxylase large chain">
    <location>
        <begin position="3"/>
        <end position="475"/>
    </location>
</feature>
<feature type="active site" description="Proton acceptor" evidence="1">
    <location>
        <position position="175"/>
    </location>
</feature>
<feature type="active site" description="Proton acceptor" evidence="1">
    <location>
        <position position="294"/>
    </location>
</feature>
<feature type="binding site" description="in homodimeric partner" evidence="1">
    <location>
        <position position="123"/>
    </location>
    <ligand>
        <name>substrate</name>
    </ligand>
</feature>
<feature type="binding site" evidence="1">
    <location>
        <position position="173"/>
    </location>
    <ligand>
        <name>substrate</name>
    </ligand>
</feature>
<feature type="binding site" evidence="1">
    <location>
        <position position="177"/>
    </location>
    <ligand>
        <name>substrate</name>
    </ligand>
</feature>
<feature type="binding site" description="via carbamate group" evidence="1">
    <location>
        <position position="201"/>
    </location>
    <ligand>
        <name>Mg(2+)</name>
        <dbReference type="ChEBI" id="CHEBI:18420"/>
    </ligand>
</feature>
<feature type="binding site" evidence="1">
    <location>
        <position position="203"/>
    </location>
    <ligand>
        <name>Mg(2+)</name>
        <dbReference type="ChEBI" id="CHEBI:18420"/>
    </ligand>
</feature>
<feature type="binding site" evidence="1">
    <location>
        <position position="204"/>
    </location>
    <ligand>
        <name>Mg(2+)</name>
        <dbReference type="ChEBI" id="CHEBI:18420"/>
    </ligand>
</feature>
<feature type="binding site" evidence="1">
    <location>
        <position position="295"/>
    </location>
    <ligand>
        <name>substrate</name>
    </ligand>
</feature>
<feature type="binding site" evidence="1">
    <location>
        <position position="327"/>
    </location>
    <ligand>
        <name>substrate</name>
    </ligand>
</feature>
<feature type="binding site" evidence="1">
    <location>
        <position position="379"/>
    </location>
    <ligand>
        <name>substrate</name>
    </ligand>
</feature>
<feature type="site" description="Transition state stabilizer" evidence="1">
    <location>
        <position position="334"/>
    </location>
</feature>
<feature type="modified residue" description="N-acetylproline" evidence="1">
    <location>
        <position position="3"/>
    </location>
</feature>
<feature type="modified residue" description="N6,N6,N6-trimethyllysine" evidence="1">
    <location>
        <position position="14"/>
    </location>
</feature>
<feature type="modified residue" description="N6-carboxylysine" evidence="1">
    <location>
        <position position="201"/>
    </location>
</feature>
<feature type="disulfide bond" description="Interchain; in linked form" evidence="1">
    <location>
        <position position="247"/>
    </location>
</feature>
<keyword id="KW-0007">Acetylation</keyword>
<keyword id="KW-0113">Calvin cycle</keyword>
<keyword id="KW-0120">Carbon dioxide fixation</keyword>
<keyword id="KW-0150">Chloroplast</keyword>
<keyword id="KW-1015">Disulfide bond</keyword>
<keyword id="KW-0456">Lyase</keyword>
<keyword id="KW-0460">Magnesium</keyword>
<keyword id="KW-0479">Metal-binding</keyword>
<keyword id="KW-0488">Methylation</keyword>
<keyword id="KW-0503">Monooxygenase</keyword>
<keyword id="KW-0560">Oxidoreductase</keyword>
<keyword id="KW-0601">Photorespiration</keyword>
<keyword id="KW-0602">Photosynthesis</keyword>
<keyword id="KW-0934">Plastid</keyword>
<evidence type="ECO:0000255" key="1">
    <source>
        <dbReference type="HAMAP-Rule" id="MF_01338"/>
    </source>
</evidence>
<name>RBL_LIQST</name>
<gene>
    <name evidence="1" type="primary">rbcL</name>
</gene>
<protein>
    <recommendedName>
        <fullName evidence="1">Ribulose bisphosphate carboxylase large chain</fullName>
        <shortName evidence="1">RuBisCO large subunit</shortName>
        <ecNumber evidence="1">4.1.1.39</ecNumber>
    </recommendedName>
</protein>
<reference key="1">
    <citation type="journal article" date="1992" name="Proc. Natl. Acad. Sci. U.S.A.">
        <title>Extensive variation in evolutionary rate of rbcL gene sequences among seed plants.</title>
        <authorList>
            <person name="Bousquet J."/>
            <person name="Strauss S.H."/>
            <person name="Doerksen A.H."/>
            <person name="Price R.A."/>
        </authorList>
    </citation>
    <scope>NUCLEOTIDE SEQUENCE [GENOMIC DNA]</scope>
</reference>
<comment type="function">
    <text evidence="1">RuBisCO catalyzes two reactions: the carboxylation of D-ribulose 1,5-bisphosphate, the primary event in carbon dioxide fixation, as well as the oxidative fragmentation of the pentose substrate in the photorespiration process. Both reactions occur simultaneously and in competition at the same active site.</text>
</comment>
<comment type="catalytic activity">
    <reaction evidence="1">
        <text>2 (2R)-3-phosphoglycerate + 2 H(+) = D-ribulose 1,5-bisphosphate + CO2 + H2O</text>
        <dbReference type="Rhea" id="RHEA:23124"/>
        <dbReference type="ChEBI" id="CHEBI:15377"/>
        <dbReference type="ChEBI" id="CHEBI:15378"/>
        <dbReference type="ChEBI" id="CHEBI:16526"/>
        <dbReference type="ChEBI" id="CHEBI:57870"/>
        <dbReference type="ChEBI" id="CHEBI:58272"/>
        <dbReference type="EC" id="4.1.1.39"/>
    </reaction>
</comment>
<comment type="catalytic activity">
    <reaction evidence="1">
        <text>D-ribulose 1,5-bisphosphate + O2 = 2-phosphoglycolate + (2R)-3-phosphoglycerate + 2 H(+)</text>
        <dbReference type="Rhea" id="RHEA:36631"/>
        <dbReference type="ChEBI" id="CHEBI:15378"/>
        <dbReference type="ChEBI" id="CHEBI:15379"/>
        <dbReference type="ChEBI" id="CHEBI:57870"/>
        <dbReference type="ChEBI" id="CHEBI:58033"/>
        <dbReference type="ChEBI" id="CHEBI:58272"/>
    </reaction>
</comment>
<comment type="cofactor">
    <cofactor evidence="1">
        <name>Mg(2+)</name>
        <dbReference type="ChEBI" id="CHEBI:18420"/>
    </cofactor>
    <text evidence="1">Binds 1 Mg(2+) ion per subunit.</text>
</comment>
<comment type="subunit">
    <text evidence="1">Heterohexadecamer of 8 large chains and 8 small chains; disulfide-linked. The disulfide link is formed within the large subunit homodimers.</text>
</comment>
<comment type="subcellular location">
    <subcellularLocation>
        <location>Plastid</location>
        <location>Chloroplast</location>
    </subcellularLocation>
</comment>
<comment type="PTM">
    <text evidence="1">The disulfide bond which can form in the large chain dimeric partners within the hexadecamer appears to be associated with oxidative stress and protein turnover.</text>
</comment>
<comment type="miscellaneous">
    <text evidence="1">The basic functional RuBisCO is composed of a large chain homodimer in a 'head-to-tail' conformation. In form I RuBisCO this homodimer is arranged in a barrel-like tetramer with the small subunits forming a tetrameric 'cap' on each end of the 'barrel'.</text>
</comment>
<comment type="similarity">
    <text evidence="1">Belongs to the RuBisCO large chain family. Type I subfamily.</text>
</comment>
<accession>Q01873</accession>
<proteinExistence type="inferred from homology"/>
<organism>
    <name type="scientific">Liquidambar styraciflua</name>
    <name type="common">Sweetgum tree</name>
    <name type="synonym">Liquidambar macrophylla</name>
    <dbReference type="NCBI Taxonomy" id="4400"/>
    <lineage>
        <taxon>Eukaryota</taxon>
        <taxon>Viridiplantae</taxon>
        <taxon>Streptophyta</taxon>
        <taxon>Embryophyta</taxon>
        <taxon>Tracheophyta</taxon>
        <taxon>Spermatophyta</taxon>
        <taxon>Magnoliopsida</taxon>
        <taxon>eudicotyledons</taxon>
        <taxon>Gunneridae</taxon>
        <taxon>Pentapetalae</taxon>
        <taxon>Saxifragales</taxon>
        <taxon>Altingiaceae</taxon>
        <taxon>Liquidambar</taxon>
    </lineage>
</organism>
<dbReference type="EC" id="4.1.1.39" evidence="1"/>
<dbReference type="EMBL" id="M58394">
    <property type="protein sequence ID" value="AAA68040.1"/>
    <property type="molecule type" value="Genomic_DNA"/>
</dbReference>
<dbReference type="SMR" id="Q01873"/>
<dbReference type="GO" id="GO:0009507">
    <property type="term" value="C:chloroplast"/>
    <property type="evidence" value="ECO:0007669"/>
    <property type="project" value="UniProtKB-SubCell"/>
</dbReference>
<dbReference type="GO" id="GO:0000287">
    <property type="term" value="F:magnesium ion binding"/>
    <property type="evidence" value="ECO:0007669"/>
    <property type="project" value="UniProtKB-UniRule"/>
</dbReference>
<dbReference type="GO" id="GO:0004497">
    <property type="term" value="F:monooxygenase activity"/>
    <property type="evidence" value="ECO:0007669"/>
    <property type="project" value="UniProtKB-KW"/>
</dbReference>
<dbReference type="GO" id="GO:0016984">
    <property type="term" value="F:ribulose-bisphosphate carboxylase activity"/>
    <property type="evidence" value="ECO:0007669"/>
    <property type="project" value="UniProtKB-UniRule"/>
</dbReference>
<dbReference type="GO" id="GO:0009853">
    <property type="term" value="P:photorespiration"/>
    <property type="evidence" value="ECO:0007669"/>
    <property type="project" value="UniProtKB-KW"/>
</dbReference>
<dbReference type="GO" id="GO:0019253">
    <property type="term" value="P:reductive pentose-phosphate cycle"/>
    <property type="evidence" value="ECO:0007669"/>
    <property type="project" value="UniProtKB-UniRule"/>
</dbReference>
<dbReference type="CDD" id="cd08212">
    <property type="entry name" value="RuBisCO_large_I"/>
    <property type="match status" value="1"/>
</dbReference>
<dbReference type="FunFam" id="3.20.20.110:FF:000001">
    <property type="entry name" value="Ribulose bisphosphate carboxylase large chain"/>
    <property type="match status" value="1"/>
</dbReference>
<dbReference type="FunFam" id="3.30.70.150:FF:000001">
    <property type="entry name" value="Ribulose bisphosphate carboxylase large chain"/>
    <property type="match status" value="1"/>
</dbReference>
<dbReference type="Gene3D" id="3.20.20.110">
    <property type="entry name" value="Ribulose bisphosphate carboxylase, large subunit, C-terminal domain"/>
    <property type="match status" value="1"/>
</dbReference>
<dbReference type="Gene3D" id="3.30.70.150">
    <property type="entry name" value="RuBisCO large subunit, N-terminal domain"/>
    <property type="match status" value="1"/>
</dbReference>
<dbReference type="HAMAP" id="MF_01338">
    <property type="entry name" value="RuBisCO_L_type1"/>
    <property type="match status" value="1"/>
</dbReference>
<dbReference type="InterPro" id="IPR033966">
    <property type="entry name" value="RuBisCO"/>
</dbReference>
<dbReference type="InterPro" id="IPR020878">
    <property type="entry name" value="RuBisCo_large_chain_AS"/>
</dbReference>
<dbReference type="InterPro" id="IPR000685">
    <property type="entry name" value="RuBisCO_lsu_C"/>
</dbReference>
<dbReference type="InterPro" id="IPR036376">
    <property type="entry name" value="RuBisCO_lsu_C_sf"/>
</dbReference>
<dbReference type="InterPro" id="IPR017443">
    <property type="entry name" value="RuBisCO_lsu_fd_N"/>
</dbReference>
<dbReference type="InterPro" id="IPR036422">
    <property type="entry name" value="RuBisCO_lsu_N_sf"/>
</dbReference>
<dbReference type="InterPro" id="IPR020888">
    <property type="entry name" value="RuBisCO_lsuI"/>
</dbReference>
<dbReference type="NCBIfam" id="NF003252">
    <property type="entry name" value="PRK04208.1"/>
    <property type="match status" value="1"/>
</dbReference>
<dbReference type="PANTHER" id="PTHR42704">
    <property type="entry name" value="RIBULOSE BISPHOSPHATE CARBOXYLASE"/>
    <property type="match status" value="1"/>
</dbReference>
<dbReference type="PANTHER" id="PTHR42704:SF16">
    <property type="entry name" value="RIBULOSE BISPHOSPHATE CARBOXYLASE LARGE CHAIN"/>
    <property type="match status" value="1"/>
</dbReference>
<dbReference type="Pfam" id="PF00016">
    <property type="entry name" value="RuBisCO_large"/>
    <property type="match status" value="1"/>
</dbReference>
<dbReference type="Pfam" id="PF02788">
    <property type="entry name" value="RuBisCO_large_N"/>
    <property type="match status" value="1"/>
</dbReference>
<dbReference type="SFLD" id="SFLDG01052">
    <property type="entry name" value="RuBisCO"/>
    <property type="match status" value="1"/>
</dbReference>
<dbReference type="SFLD" id="SFLDS00014">
    <property type="entry name" value="RuBisCO"/>
    <property type="match status" value="1"/>
</dbReference>
<dbReference type="SFLD" id="SFLDG00301">
    <property type="entry name" value="RuBisCO-like_proteins"/>
    <property type="match status" value="1"/>
</dbReference>
<dbReference type="SUPFAM" id="SSF51649">
    <property type="entry name" value="RuBisCo, C-terminal domain"/>
    <property type="match status" value="1"/>
</dbReference>
<dbReference type="SUPFAM" id="SSF54966">
    <property type="entry name" value="RuBisCO, large subunit, small (N-terminal) domain"/>
    <property type="match status" value="1"/>
</dbReference>
<dbReference type="PROSITE" id="PS00157">
    <property type="entry name" value="RUBISCO_LARGE"/>
    <property type="match status" value="1"/>
</dbReference>
<sequence>MSPQTETKASVGFKAGVKDYKLTYYTPEYETKDTDILAAFRVTPQPGVPPEEAGAAVAAESSTGTWTTVWTDGLTSLDRYKGRCYHIEPVAGEESQFIAYVAYPLDLFEEGSVTNMFTSIVGNVFGFKALRALRLEDLRIPPAYSKTFQGPPHGIQVERDKLNKYGRPLLGCTIKPKLGLSAKNYGRAVYECLRGGLDFTKDDENVNSQPFMRWRDRFLFCAEAIYKAQAETGEIKGHYLNATAGTCEEMIKRAVFARELGVPIVMHDYLTGGFTANTSLAHYCRDNGLLLHIHRAMHAVIDRQKNHGMHFRVLAKALRMSGGDHIHAGTVVGKLEGEREITLGFVDLLRDDFIEKDRSRGIYFTQDWVSLPGVLPVASGGIHVWHMPALTEIFGDDSVLQFGGGTLGHPWGNAPGAVANRVALEACVQARNEGRDLAREGNEIIREASKWSPELAAACEVWKEIKFEFEAMDTL</sequence>
<geneLocation type="chloroplast"/>